<sequence length="230" mass="24708">MAKKGKKYQEAASKVDRTQHYSVEEAIKLAKETSIANFDASVEVAFRLGIDTRKNDQQIRGAVVLPNGTGKSQSVLVFAKGDKIAEAEAAGADYVGEAEYVQKIQQGWFDFDVVVATPDMMGEVGKLGRVLGPKGLMPNPKTGTVTMDVKKAVEEIKAGKVEYRAEKAGIVHASIGKVSFTDEQLIENFNTLQDVLAKAKPSSAKGTYFKSVAVTTTMGPGVKIDTASFK</sequence>
<feature type="chain" id="PRO_1000086311" description="Large ribosomal subunit protein uL1">
    <location>
        <begin position="1"/>
        <end position="230"/>
    </location>
</feature>
<dbReference type="EMBL" id="CP000703">
    <property type="protein sequence ID" value="ABQ48365.1"/>
    <property type="molecule type" value="Genomic_DNA"/>
</dbReference>
<dbReference type="RefSeq" id="WP_001074619.1">
    <property type="nucleotide sequence ID" value="NC_009487.1"/>
</dbReference>
<dbReference type="SMR" id="A5IQ92"/>
<dbReference type="GeneID" id="98344872"/>
<dbReference type="KEGG" id="saj:SaurJH9_0561"/>
<dbReference type="HOGENOM" id="CLU_062853_0_0_9"/>
<dbReference type="GO" id="GO:0015934">
    <property type="term" value="C:large ribosomal subunit"/>
    <property type="evidence" value="ECO:0007669"/>
    <property type="project" value="InterPro"/>
</dbReference>
<dbReference type="GO" id="GO:0019843">
    <property type="term" value="F:rRNA binding"/>
    <property type="evidence" value="ECO:0007669"/>
    <property type="project" value="UniProtKB-UniRule"/>
</dbReference>
<dbReference type="GO" id="GO:0003735">
    <property type="term" value="F:structural constituent of ribosome"/>
    <property type="evidence" value="ECO:0007669"/>
    <property type="project" value="InterPro"/>
</dbReference>
<dbReference type="GO" id="GO:0000049">
    <property type="term" value="F:tRNA binding"/>
    <property type="evidence" value="ECO:0007669"/>
    <property type="project" value="UniProtKB-KW"/>
</dbReference>
<dbReference type="GO" id="GO:0006417">
    <property type="term" value="P:regulation of translation"/>
    <property type="evidence" value="ECO:0007669"/>
    <property type="project" value="UniProtKB-KW"/>
</dbReference>
<dbReference type="GO" id="GO:0006412">
    <property type="term" value="P:translation"/>
    <property type="evidence" value="ECO:0007669"/>
    <property type="project" value="UniProtKB-UniRule"/>
</dbReference>
<dbReference type="CDD" id="cd00403">
    <property type="entry name" value="Ribosomal_L1"/>
    <property type="match status" value="1"/>
</dbReference>
<dbReference type="FunFam" id="3.40.50.790:FF:000001">
    <property type="entry name" value="50S ribosomal protein L1"/>
    <property type="match status" value="1"/>
</dbReference>
<dbReference type="Gene3D" id="3.30.190.20">
    <property type="match status" value="1"/>
</dbReference>
<dbReference type="Gene3D" id="3.40.50.790">
    <property type="match status" value="1"/>
</dbReference>
<dbReference type="HAMAP" id="MF_01318_B">
    <property type="entry name" value="Ribosomal_uL1_B"/>
    <property type="match status" value="1"/>
</dbReference>
<dbReference type="InterPro" id="IPR005878">
    <property type="entry name" value="Ribosom_uL1_bac-type"/>
</dbReference>
<dbReference type="InterPro" id="IPR002143">
    <property type="entry name" value="Ribosomal_uL1"/>
</dbReference>
<dbReference type="InterPro" id="IPR023674">
    <property type="entry name" value="Ribosomal_uL1-like"/>
</dbReference>
<dbReference type="InterPro" id="IPR028364">
    <property type="entry name" value="Ribosomal_uL1/biogenesis"/>
</dbReference>
<dbReference type="InterPro" id="IPR016095">
    <property type="entry name" value="Ribosomal_uL1_3-a/b-sand"/>
</dbReference>
<dbReference type="InterPro" id="IPR023673">
    <property type="entry name" value="Ribosomal_uL1_CS"/>
</dbReference>
<dbReference type="NCBIfam" id="TIGR01169">
    <property type="entry name" value="rplA_bact"/>
    <property type="match status" value="1"/>
</dbReference>
<dbReference type="PANTHER" id="PTHR36427">
    <property type="entry name" value="54S RIBOSOMAL PROTEIN L1, MITOCHONDRIAL"/>
    <property type="match status" value="1"/>
</dbReference>
<dbReference type="PANTHER" id="PTHR36427:SF3">
    <property type="entry name" value="LARGE RIBOSOMAL SUBUNIT PROTEIN UL1M"/>
    <property type="match status" value="1"/>
</dbReference>
<dbReference type="Pfam" id="PF00687">
    <property type="entry name" value="Ribosomal_L1"/>
    <property type="match status" value="1"/>
</dbReference>
<dbReference type="PIRSF" id="PIRSF002155">
    <property type="entry name" value="Ribosomal_L1"/>
    <property type="match status" value="1"/>
</dbReference>
<dbReference type="SUPFAM" id="SSF56808">
    <property type="entry name" value="Ribosomal protein L1"/>
    <property type="match status" value="1"/>
</dbReference>
<dbReference type="PROSITE" id="PS01199">
    <property type="entry name" value="RIBOSOMAL_L1"/>
    <property type="match status" value="1"/>
</dbReference>
<reference key="1">
    <citation type="submission" date="2007-05" db="EMBL/GenBank/DDBJ databases">
        <title>Complete sequence of chromosome of Staphylococcus aureus subsp. aureus JH9.</title>
        <authorList>
            <consortium name="US DOE Joint Genome Institute"/>
            <person name="Copeland A."/>
            <person name="Lucas S."/>
            <person name="Lapidus A."/>
            <person name="Barry K."/>
            <person name="Detter J.C."/>
            <person name="Glavina del Rio T."/>
            <person name="Hammon N."/>
            <person name="Israni S."/>
            <person name="Pitluck S."/>
            <person name="Chain P."/>
            <person name="Malfatti S."/>
            <person name="Shin M."/>
            <person name="Vergez L."/>
            <person name="Schmutz J."/>
            <person name="Larimer F."/>
            <person name="Land M."/>
            <person name="Hauser L."/>
            <person name="Kyrpides N."/>
            <person name="Kim E."/>
            <person name="Tomasz A."/>
            <person name="Richardson P."/>
        </authorList>
    </citation>
    <scope>NUCLEOTIDE SEQUENCE [LARGE SCALE GENOMIC DNA]</scope>
    <source>
        <strain>JH9</strain>
    </source>
</reference>
<protein>
    <recommendedName>
        <fullName evidence="1">Large ribosomal subunit protein uL1</fullName>
    </recommendedName>
    <alternativeName>
        <fullName evidence="2">50S ribosomal protein L1</fullName>
    </alternativeName>
</protein>
<accession>A5IQ92</accession>
<proteinExistence type="inferred from homology"/>
<evidence type="ECO:0000255" key="1">
    <source>
        <dbReference type="HAMAP-Rule" id="MF_01318"/>
    </source>
</evidence>
<evidence type="ECO:0000305" key="2"/>
<keyword id="KW-0678">Repressor</keyword>
<keyword id="KW-0687">Ribonucleoprotein</keyword>
<keyword id="KW-0689">Ribosomal protein</keyword>
<keyword id="KW-0694">RNA-binding</keyword>
<keyword id="KW-0699">rRNA-binding</keyword>
<keyword id="KW-0810">Translation regulation</keyword>
<keyword id="KW-0820">tRNA-binding</keyword>
<comment type="function">
    <text evidence="1">Binds directly to 23S rRNA. The L1 stalk is quite mobile in the ribosome, and is involved in E site tRNA release.</text>
</comment>
<comment type="function">
    <text evidence="1">Protein L1 is also a translational repressor protein, it controls the translation of the L11 operon by binding to its mRNA.</text>
</comment>
<comment type="subunit">
    <text evidence="1">Part of the 50S ribosomal subunit.</text>
</comment>
<comment type="similarity">
    <text evidence="1">Belongs to the universal ribosomal protein uL1 family.</text>
</comment>
<name>RL1_STAA9</name>
<gene>
    <name evidence="1" type="primary">rplA</name>
    <name type="ordered locus">SaurJH9_0561</name>
</gene>
<organism>
    <name type="scientific">Staphylococcus aureus (strain JH9)</name>
    <dbReference type="NCBI Taxonomy" id="359786"/>
    <lineage>
        <taxon>Bacteria</taxon>
        <taxon>Bacillati</taxon>
        <taxon>Bacillota</taxon>
        <taxon>Bacilli</taxon>
        <taxon>Bacillales</taxon>
        <taxon>Staphylococcaceae</taxon>
        <taxon>Staphylococcus</taxon>
    </lineage>
</organism>